<sequence length="334" mass="37718">MNERMVDQSMHSEETDFELSLRPTRLRQYIGQNSIKSNLEVFIKAAKLRHEPLDHVLLFGPPGLGKTTLSNIIANEMEVNIRTVSGPSLERPGDLAAILSGLQPGDVLFIDEIHRLSSVVEEVLYPAMEDFFLDIIIGKGDEARSIRIDLPPFTLVGATTRAGSLTGPLRDRFGVHLRLEYYNESDLKEIIIRTAEVLGTGIDEESAIELAKRSRGTPRVANRLLKRVRDFQQVNEDEQIYIETTKHALGLLQVDQHGLDYIDHKMMNCIIKQYNGGPVGLDTIAVTIGEERITIEDVYEPFLIQKGFLERTPRGRKATPLAYEHFAKSNEERE</sequence>
<feature type="chain" id="PRO_1000070971" description="Holliday junction branch migration complex subunit RuvB">
    <location>
        <begin position="1"/>
        <end position="334"/>
    </location>
</feature>
<feature type="region of interest" description="Large ATPase domain (RuvB-L)" evidence="1">
    <location>
        <begin position="1"/>
        <end position="182"/>
    </location>
</feature>
<feature type="region of interest" description="Small ATPAse domain (RuvB-S)" evidence="1">
    <location>
        <begin position="183"/>
        <end position="253"/>
    </location>
</feature>
<feature type="region of interest" description="Head domain (RuvB-H)" evidence="1">
    <location>
        <begin position="256"/>
        <end position="334"/>
    </location>
</feature>
<feature type="binding site" evidence="1">
    <location>
        <position position="21"/>
    </location>
    <ligand>
        <name>ATP</name>
        <dbReference type="ChEBI" id="CHEBI:30616"/>
    </ligand>
</feature>
<feature type="binding site" evidence="1">
    <location>
        <position position="22"/>
    </location>
    <ligand>
        <name>ATP</name>
        <dbReference type="ChEBI" id="CHEBI:30616"/>
    </ligand>
</feature>
<feature type="binding site" evidence="1">
    <location>
        <position position="63"/>
    </location>
    <ligand>
        <name>ATP</name>
        <dbReference type="ChEBI" id="CHEBI:30616"/>
    </ligand>
</feature>
<feature type="binding site" evidence="1">
    <location>
        <position position="66"/>
    </location>
    <ligand>
        <name>ATP</name>
        <dbReference type="ChEBI" id="CHEBI:30616"/>
    </ligand>
</feature>
<feature type="binding site" evidence="1">
    <location>
        <position position="67"/>
    </location>
    <ligand>
        <name>ATP</name>
        <dbReference type="ChEBI" id="CHEBI:30616"/>
    </ligand>
</feature>
<feature type="binding site" evidence="1">
    <location>
        <position position="67"/>
    </location>
    <ligand>
        <name>Mg(2+)</name>
        <dbReference type="ChEBI" id="CHEBI:18420"/>
    </ligand>
</feature>
<feature type="binding site" evidence="1">
    <location>
        <position position="68"/>
    </location>
    <ligand>
        <name>ATP</name>
        <dbReference type="ChEBI" id="CHEBI:30616"/>
    </ligand>
</feature>
<feature type="binding site" evidence="1">
    <location>
        <begin position="129"/>
        <end position="131"/>
    </location>
    <ligand>
        <name>ATP</name>
        <dbReference type="ChEBI" id="CHEBI:30616"/>
    </ligand>
</feature>
<feature type="binding site" evidence="1">
    <location>
        <position position="172"/>
    </location>
    <ligand>
        <name>ATP</name>
        <dbReference type="ChEBI" id="CHEBI:30616"/>
    </ligand>
</feature>
<feature type="binding site" evidence="1">
    <location>
        <position position="182"/>
    </location>
    <ligand>
        <name>ATP</name>
        <dbReference type="ChEBI" id="CHEBI:30616"/>
    </ligand>
</feature>
<feature type="binding site" evidence="1">
    <location>
        <position position="219"/>
    </location>
    <ligand>
        <name>ATP</name>
        <dbReference type="ChEBI" id="CHEBI:30616"/>
    </ligand>
</feature>
<feature type="binding site" evidence="1">
    <location>
        <position position="292"/>
    </location>
    <ligand>
        <name>DNA</name>
        <dbReference type="ChEBI" id="CHEBI:16991"/>
    </ligand>
</feature>
<feature type="binding site" evidence="1">
    <location>
        <position position="311"/>
    </location>
    <ligand>
        <name>DNA</name>
        <dbReference type="ChEBI" id="CHEBI:16991"/>
    </ligand>
</feature>
<feature type="binding site" evidence="1">
    <location>
        <position position="316"/>
    </location>
    <ligand>
        <name>DNA</name>
        <dbReference type="ChEBI" id="CHEBI:16991"/>
    </ligand>
</feature>
<accession>A6QHI3</accession>
<reference key="1">
    <citation type="journal article" date="2008" name="J. Bacteriol.">
        <title>Genome sequence of Staphylococcus aureus strain Newman and comparative analysis of staphylococcal genomes: polymorphism and evolution of two major pathogenicity islands.</title>
        <authorList>
            <person name="Baba T."/>
            <person name="Bae T."/>
            <person name="Schneewind O."/>
            <person name="Takeuchi F."/>
            <person name="Hiramatsu K."/>
        </authorList>
    </citation>
    <scope>NUCLEOTIDE SEQUENCE [LARGE SCALE GENOMIC DNA]</scope>
    <source>
        <strain>Newman</strain>
    </source>
</reference>
<organism>
    <name type="scientific">Staphylococcus aureus (strain Newman)</name>
    <dbReference type="NCBI Taxonomy" id="426430"/>
    <lineage>
        <taxon>Bacteria</taxon>
        <taxon>Bacillati</taxon>
        <taxon>Bacillota</taxon>
        <taxon>Bacilli</taxon>
        <taxon>Bacillales</taxon>
        <taxon>Staphylococcaceae</taxon>
        <taxon>Staphylococcus</taxon>
    </lineage>
</organism>
<evidence type="ECO:0000255" key="1">
    <source>
        <dbReference type="HAMAP-Rule" id="MF_00016"/>
    </source>
</evidence>
<keyword id="KW-0067">ATP-binding</keyword>
<keyword id="KW-0963">Cytoplasm</keyword>
<keyword id="KW-0227">DNA damage</keyword>
<keyword id="KW-0233">DNA recombination</keyword>
<keyword id="KW-0234">DNA repair</keyword>
<keyword id="KW-0238">DNA-binding</keyword>
<keyword id="KW-0378">Hydrolase</keyword>
<keyword id="KW-0547">Nucleotide-binding</keyword>
<protein>
    <recommendedName>
        <fullName evidence="1">Holliday junction branch migration complex subunit RuvB</fullName>
        <ecNumber evidence="1">3.6.4.-</ecNumber>
    </recommendedName>
</protein>
<dbReference type="EC" id="3.6.4.-" evidence="1"/>
<dbReference type="EMBL" id="AP009351">
    <property type="protein sequence ID" value="BAF67815.1"/>
    <property type="molecule type" value="Genomic_DNA"/>
</dbReference>
<dbReference type="RefSeq" id="WP_001005767.1">
    <property type="nucleotide sequence ID" value="NZ_JBBIAE010000001.1"/>
</dbReference>
<dbReference type="SMR" id="A6QHI3"/>
<dbReference type="KEGG" id="sae:NWMN_1543"/>
<dbReference type="HOGENOM" id="CLU_055599_1_0_9"/>
<dbReference type="Proteomes" id="UP000006386">
    <property type="component" value="Chromosome"/>
</dbReference>
<dbReference type="GO" id="GO:0005737">
    <property type="term" value="C:cytoplasm"/>
    <property type="evidence" value="ECO:0007669"/>
    <property type="project" value="UniProtKB-SubCell"/>
</dbReference>
<dbReference type="GO" id="GO:0048476">
    <property type="term" value="C:Holliday junction resolvase complex"/>
    <property type="evidence" value="ECO:0007669"/>
    <property type="project" value="UniProtKB-UniRule"/>
</dbReference>
<dbReference type="GO" id="GO:0005524">
    <property type="term" value="F:ATP binding"/>
    <property type="evidence" value="ECO:0007669"/>
    <property type="project" value="UniProtKB-UniRule"/>
</dbReference>
<dbReference type="GO" id="GO:0016887">
    <property type="term" value="F:ATP hydrolysis activity"/>
    <property type="evidence" value="ECO:0007669"/>
    <property type="project" value="InterPro"/>
</dbReference>
<dbReference type="GO" id="GO:0000400">
    <property type="term" value="F:four-way junction DNA binding"/>
    <property type="evidence" value="ECO:0007669"/>
    <property type="project" value="UniProtKB-UniRule"/>
</dbReference>
<dbReference type="GO" id="GO:0009378">
    <property type="term" value="F:four-way junction helicase activity"/>
    <property type="evidence" value="ECO:0007669"/>
    <property type="project" value="InterPro"/>
</dbReference>
<dbReference type="GO" id="GO:0006310">
    <property type="term" value="P:DNA recombination"/>
    <property type="evidence" value="ECO:0007669"/>
    <property type="project" value="UniProtKB-UniRule"/>
</dbReference>
<dbReference type="GO" id="GO:0006281">
    <property type="term" value="P:DNA repair"/>
    <property type="evidence" value="ECO:0007669"/>
    <property type="project" value="UniProtKB-UniRule"/>
</dbReference>
<dbReference type="CDD" id="cd00009">
    <property type="entry name" value="AAA"/>
    <property type="match status" value="1"/>
</dbReference>
<dbReference type="Gene3D" id="1.10.8.60">
    <property type="match status" value="1"/>
</dbReference>
<dbReference type="Gene3D" id="3.40.50.300">
    <property type="entry name" value="P-loop containing nucleotide triphosphate hydrolases"/>
    <property type="match status" value="1"/>
</dbReference>
<dbReference type="Gene3D" id="1.10.10.10">
    <property type="entry name" value="Winged helix-like DNA-binding domain superfamily/Winged helix DNA-binding domain"/>
    <property type="match status" value="1"/>
</dbReference>
<dbReference type="HAMAP" id="MF_00016">
    <property type="entry name" value="DNA_HJ_migration_RuvB"/>
    <property type="match status" value="1"/>
</dbReference>
<dbReference type="InterPro" id="IPR003593">
    <property type="entry name" value="AAA+_ATPase"/>
</dbReference>
<dbReference type="InterPro" id="IPR041445">
    <property type="entry name" value="AAA_lid_4"/>
</dbReference>
<dbReference type="InterPro" id="IPR004605">
    <property type="entry name" value="DNA_helicase_Holl-junc_RuvB"/>
</dbReference>
<dbReference type="InterPro" id="IPR027417">
    <property type="entry name" value="P-loop_NTPase"/>
</dbReference>
<dbReference type="InterPro" id="IPR008824">
    <property type="entry name" value="RuvB-like_N"/>
</dbReference>
<dbReference type="InterPro" id="IPR008823">
    <property type="entry name" value="RuvB_C"/>
</dbReference>
<dbReference type="InterPro" id="IPR036388">
    <property type="entry name" value="WH-like_DNA-bd_sf"/>
</dbReference>
<dbReference type="InterPro" id="IPR036390">
    <property type="entry name" value="WH_DNA-bd_sf"/>
</dbReference>
<dbReference type="NCBIfam" id="NF000868">
    <property type="entry name" value="PRK00080.1"/>
    <property type="match status" value="1"/>
</dbReference>
<dbReference type="NCBIfam" id="TIGR00635">
    <property type="entry name" value="ruvB"/>
    <property type="match status" value="1"/>
</dbReference>
<dbReference type="PANTHER" id="PTHR42848">
    <property type="match status" value="1"/>
</dbReference>
<dbReference type="PANTHER" id="PTHR42848:SF1">
    <property type="entry name" value="HOLLIDAY JUNCTION BRANCH MIGRATION COMPLEX SUBUNIT RUVB"/>
    <property type="match status" value="1"/>
</dbReference>
<dbReference type="Pfam" id="PF17864">
    <property type="entry name" value="AAA_lid_4"/>
    <property type="match status" value="1"/>
</dbReference>
<dbReference type="Pfam" id="PF05491">
    <property type="entry name" value="RuvB_C"/>
    <property type="match status" value="1"/>
</dbReference>
<dbReference type="Pfam" id="PF05496">
    <property type="entry name" value="RuvB_N"/>
    <property type="match status" value="1"/>
</dbReference>
<dbReference type="SMART" id="SM00382">
    <property type="entry name" value="AAA"/>
    <property type="match status" value="1"/>
</dbReference>
<dbReference type="SUPFAM" id="SSF52540">
    <property type="entry name" value="P-loop containing nucleoside triphosphate hydrolases"/>
    <property type="match status" value="1"/>
</dbReference>
<dbReference type="SUPFAM" id="SSF46785">
    <property type="entry name" value="Winged helix' DNA-binding domain"/>
    <property type="match status" value="1"/>
</dbReference>
<name>RUVB_STAAE</name>
<comment type="function">
    <text evidence="1">The RuvA-RuvB-RuvC complex processes Holliday junction (HJ) DNA during genetic recombination and DNA repair, while the RuvA-RuvB complex plays an important role in the rescue of blocked DNA replication forks via replication fork reversal (RFR). RuvA specifically binds to HJ cruciform DNA, conferring on it an open structure. The RuvB hexamer acts as an ATP-dependent pump, pulling dsDNA into and through the RuvAB complex. RuvB forms 2 homohexamers on either side of HJ DNA bound by 1 or 2 RuvA tetramers; 4 subunits per hexamer contact DNA at a time. Coordinated motions by a converter formed by DNA-disengaged RuvB subunits stimulates ATP hydrolysis and nucleotide exchange. Immobilization of the converter enables RuvB to convert the ATP-contained energy into a lever motion, pulling 2 nucleotides of DNA out of the RuvA tetramer per ATP hydrolyzed, thus driving DNA branch migration. The RuvB motors rotate together with the DNA substrate, which together with the progressing nucleotide cycle form the mechanistic basis for DNA recombination by continuous HJ branch migration. Branch migration allows RuvC to scan DNA until it finds its consensus sequence, where it cleaves and resolves cruciform DNA.</text>
</comment>
<comment type="catalytic activity">
    <reaction evidence="1">
        <text>ATP + H2O = ADP + phosphate + H(+)</text>
        <dbReference type="Rhea" id="RHEA:13065"/>
        <dbReference type="ChEBI" id="CHEBI:15377"/>
        <dbReference type="ChEBI" id="CHEBI:15378"/>
        <dbReference type="ChEBI" id="CHEBI:30616"/>
        <dbReference type="ChEBI" id="CHEBI:43474"/>
        <dbReference type="ChEBI" id="CHEBI:456216"/>
    </reaction>
</comment>
<comment type="subunit">
    <text evidence="1">Homohexamer. Forms an RuvA(8)-RuvB(12)-Holliday junction (HJ) complex. HJ DNA is sandwiched between 2 RuvA tetramers; dsDNA enters through RuvA and exits via RuvB. An RuvB hexamer assembles on each DNA strand where it exits the tetramer. Each RuvB hexamer is contacted by two RuvA subunits (via domain III) on 2 adjacent RuvB subunits; this complex drives branch migration. In the full resolvosome a probable DNA-RuvA(4)-RuvB(12)-RuvC(2) complex forms which resolves the HJ.</text>
</comment>
<comment type="subcellular location">
    <subcellularLocation>
        <location evidence="1">Cytoplasm</location>
    </subcellularLocation>
</comment>
<comment type="domain">
    <text evidence="1">Has 3 domains, the large (RuvB-L) and small ATPase (RuvB-S) domains and the C-terminal head (RuvB-H) domain. The head domain binds DNA, while the ATPase domains jointly bind ATP, ADP or are empty depending on the state of the subunit in the translocation cycle. During a single DNA translocation step the structure of each domain remains the same, but their relative positions change.</text>
</comment>
<comment type="similarity">
    <text evidence="1">Belongs to the RuvB family.</text>
</comment>
<proteinExistence type="inferred from homology"/>
<gene>
    <name evidence="1" type="primary">ruvB</name>
    <name type="ordered locus">NWMN_1543</name>
</gene>